<dbReference type="EC" id="2.7.7.59" evidence="1"/>
<dbReference type="EC" id="3.1.4.-" evidence="1"/>
<dbReference type="EMBL" id="BX571861">
    <property type="protein sequence ID" value="CAE12965.1"/>
    <property type="molecule type" value="Genomic_DNA"/>
</dbReference>
<dbReference type="RefSeq" id="WP_011145046.1">
    <property type="nucleotide sequence ID" value="NC_005126.1"/>
</dbReference>
<dbReference type="SMR" id="Q7N8P9"/>
<dbReference type="STRING" id="243265.plu0670"/>
<dbReference type="GeneID" id="48846959"/>
<dbReference type="KEGG" id="plu:plu0670"/>
<dbReference type="eggNOG" id="COG2844">
    <property type="taxonomic scope" value="Bacteria"/>
</dbReference>
<dbReference type="HOGENOM" id="CLU_012833_0_0_6"/>
<dbReference type="OrthoDB" id="9758038at2"/>
<dbReference type="Proteomes" id="UP000002514">
    <property type="component" value="Chromosome"/>
</dbReference>
<dbReference type="GO" id="GO:0008773">
    <property type="term" value="F:[protein-PII] uridylyltransferase activity"/>
    <property type="evidence" value="ECO:0007669"/>
    <property type="project" value="UniProtKB-UniRule"/>
</dbReference>
<dbReference type="GO" id="GO:0008081">
    <property type="term" value="F:phosphoric diester hydrolase activity"/>
    <property type="evidence" value="ECO:0007669"/>
    <property type="project" value="UniProtKB-UniRule"/>
</dbReference>
<dbReference type="GO" id="GO:0006808">
    <property type="term" value="P:regulation of nitrogen utilization"/>
    <property type="evidence" value="ECO:0007669"/>
    <property type="project" value="UniProtKB-UniRule"/>
</dbReference>
<dbReference type="CDD" id="cd04899">
    <property type="entry name" value="ACT_ACR-UUR-like_2"/>
    <property type="match status" value="1"/>
</dbReference>
<dbReference type="CDD" id="cd04900">
    <property type="entry name" value="ACT_UUR-like_1"/>
    <property type="match status" value="1"/>
</dbReference>
<dbReference type="CDD" id="cd00077">
    <property type="entry name" value="HDc"/>
    <property type="match status" value="1"/>
</dbReference>
<dbReference type="CDD" id="cd05401">
    <property type="entry name" value="NT_GlnE_GlnD_like"/>
    <property type="match status" value="1"/>
</dbReference>
<dbReference type="Gene3D" id="1.10.3210.10">
    <property type="entry name" value="Hypothetical protein af1432"/>
    <property type="match status" value="1"/>
</dbReference>
<dbReference type="Gene3D" id="1.20.120.330">
    <property type="entry name" value="Nucleotidyltransferases domain 2"/>
    <property type="match status" value="1"/>
</dbReference>
<dbReference type="HAMAP" id="MF_00277">
    <property type="entry name" value="PII_uridylyl_transf"/>
    <property type="match status" value="1"/>
</dbReference>
<dbReference type="InterPro" id="IPR045865">
    <property type="entry name" value="ACT-like_dom_sf"/>
</dbReference>
<dbReference type="InterPro" id="IPR002912">
    <property type="entry name" value="ACT_dom"/>
</dbReference>
<dbReference type="InterPro" id="IPR003607">
    <property type="entry name" value="HD/PDEase_dom"/>
</dbReference>
<dbReference type="InterPro" id="IPR006674">
    <property type="entry name" value="HD_domain"/>
</dbReference>
<dbReference type="InterPro" id="IPR043519">
    <property type="entry name" value="NT_sf"/>
</dbReference>
<dbReference type="InterPro" id="IPR013546">
    <property type="entry name" value="PII_UdlTrfase/GS_AdlTrfase"/>
</dbReference>
<dbReference type="InterPro" id="IPR010043">
    <property type="entry name" value="UTase/UR"/>
</dbReference>
<dbReference type="NCBIfam" id="NF002487">
    <property type="entry name" value="PRK01759.1"/>
    <property type="match status" value="1"/>
</dbReference>
<dbReference type="NCBIfam" id="NF003448">
    <property type="entry name" value="PRK05007.1"/>
    <property type="match status" value="1"/>
</dbReference>
<dbReference type="NCBIfam" id="TIGR01693">
    <property type="entry name" value="UTase_glnD"/>
    <property type="match status" value="1"/>
</dbReference>
<dbReference type="PANTHER" id="PTHR47320">
    <property type="entry name" value="BIFUNCTIONAL URIDYLYLTRANSFERASE/URIDYLYL-REMOVING ENZYME"/>
    <property type="match status" value="1"/>
</dbReference>
<dbReference type="PANTHER" id="PTHR47320:SF1">
    <property type="entry name" value="BIFUNCTIONAL URIDYLYLTRANSFERASE_URIDYLYL-REMOVING ENZYME"/>
    <property type="match status" value="1"/>
</dbReference>
<dbReference type="Pfam" id="PF01842">
    <property type="entry name" value="ACT"/>
    <property type="match status" value="1"/>
</dbReference>
<dbReference type="Pfam" id="PF08335">
    <property type="entry name" value="GlnD_UR_UTase"/>
    <property type="match status" value="1"/>
</dbReference>
<dbReference type="Pfam" id="PF01966">
    <property type="entry name" value="HD"/>
    <property type="match status" value="1"/>
</dbReference>
<dbReference type="PIRSF" id="PIRSF006288">
    <property type="entry name" value="PII_uridyltransf"/>
    <property type="match status" value="1"/>
</dbReference>
<dbReference type="SMART" id="SM00471">
    <property type="entry name" value="HDc"/>
    <property type="match status" value="1"/>
</dbReference>
<dbReference type="SUPFAM" id="SSF55021">
    <property type="entry name" value="ACT-like"/>
    <property type="match status" value="2"/>
</dbReference>
<dbReference type="SUPFAM" id="SSF109604">
    <property type="entry name" value="HD-domain/PDEase-like"/>
    <property type="match status" value="1"/>
</dbReference>
<dbReference type="SUPFAM" id="SSF81301">
    <property type="entry name" value="Nucleotidyltransferase"/>
    <property type="match status" value="1"/>
</dbReference>
<dbReference type="SUPFAM" id="SSF81593">
    <property type="entry name" value="Nucleotidyltransferase substrate binding subunit/domain"/>
    <property type="match status" value="1"/>
</dbReference>
<dbReference type="PROSITE" id="PS51671">
    <property type="entry name" value="ACT"/>
    <property type="match status" value="2"/>
</dbReference>
<dbReference type="PROSITE" id="PS51831">
    <property type="entry name" value="HD"/>
    <property type="match status" value="1"/>
</dbReference>
<reference key="1">
    <citation type="journal article" date="2003" name="Nat. Biotechnol.">
        <title>The genome sequence of the entomopathogenic bacterium Photorhabdus luminescens.</title>
        <authorList>
            <person name="Duchaud E."/>
            <person name="Rusniok C."/>
            <person name="Frangeul L."/>
            <person name="Buchrieser C."/>
            <person name="Givaudan A."/>
            <person name="Taourit S."/>
            <person name="Bocs S."/>
            <person name="Boursaux-Eude C."/>
            <person name="Chandler M."/>
            <person name="Charles J.-F."/>
            <person name="Dassa E."/>
            <person name="Derose R."/>
            <person name="Derzelle S."/>
            <person name="Freyssinet G."/>
            <person name="Gaudriault S."/>
            <person name="Medigue C."/>
            <person name="Lanois A."/>
            <person name="Powell K."/>
            <person name="Siguier P."/>
            <person name="Vincent R."/>
            <person name="Wingate V."/>
            <person name="Zouine M."/>
            <person name="Glaser P."/>
            <person name="Boemare N."/>
            <person name="Danchin A."/>
            <person name="Kunst F."/>
        </authorList>
    </citation>
    <scope>NUCLEOTIDE SEQUENCE [LARGE SCALE GENOMIC DNA]</scope>
    <source>
        <strain>DSM 15139 / CIP 105565 / TT01</strain>
    </source>
</reference>
<organism>
    <name type="scientific">Photorhabdus laumondii subsp. laumondii (strain DSM 15139 / CIP 105565 / TT01)</name>
    <name type="common">Photorhabdus luminescens subsp. laumondii</name>
    <dbReference type="NCBI Taxonomy" id="243265"/>
    <lineage>
        <taxon>Bacteria</taxon>
        <taxon>Pseudomonadati</taxon>
        <taxon>Pseudomonadota</taxon>
        <taxon>Gammaproteobacteria</taxon>
        <taxon>Enterobacterales</taxon>
        <taxon>Morganellaceae</taxon>
        <taxon>Photorhabdus</taxon>
    </lineage>
</organism>
<keyword id="KW-0378">Hydrolase</keyword>
<keyword id="KW-0460">Magnesium</keyword>
<keyword id="KW-0511">Multifunctional enzyme</keyword>
<keyword id="KW-0548">Nucleotidyltransferase</keyword>
<keyword id="KW-1185">Reference proteome</keyword>
<keyword id="KW-0677">Repeat</keyword>
<keyword id="KW-0808">Transferase</keyword>
<proteinExistence type="inferred from homology"/>
<gene>
    <name evidence="1" type="primary">glnD</name>
    <name type="ordered locus">plu0670</name>
</gene>
<name>GLND_PHOLL</name>
<comment type="function">
    <text evidence="1">Modifies, by uridylylation and deuridylylation, the PII regulatory proteins (GlnB and homologs), in response to the nitrogen status of the cell that GlnD senses through the glutamine level. Under low glutamine levels, catalyzes the conversion of the PII proteins and UTP to PII-UMP and PPi, while under higher glutamine levels, GlnD hydrolyzes PII-UMP to PII and UMP (deuridylylation). Thus, controls uridylylation state and activity of the PII proteins, and plays an important role in the regulation of nitrogen assimilation and metabolism.</text>
</comment>
<comment type="catalytic activity">
    <reaction evidence="1">
        <text>[protein-PII]-L-tyrosine + UTP = [protein-PII]-uridylyl-L-tyrosine + diphosphate</text>
        <dbReference type="Rhea" id="RHEA:13673"/>
        <dbReference type="Rhea" id="RHEA-COMP:12147"/>
        <dbReference type="Rhea" id="RHEA-COMP:12148"/>
        <dbReference type="ChEBI" id="CHEBI:33019"/>
        <dbReference type="ChEBI" id="CHEBI:46398"/>
        <dbReference type="ChEBI" id="CHEBI:46858"/>
        <dbReference type="ChEBI" id="CHEBI:90602"/>
        <dbReference type="EC" id="2.7.7.59"/>
    </reaction>
</comment>
<comment type="catalytic activity">
    <reaction evidence="1">
        <text>[protein-PII]-uridylyl-L-tyrosine + H2O = [protein-PII]-L-tyrosine + UMP + H(+)</text>
        <dbReference type="Rhea" id="RHEA:48600"/>
        <dbReference type="Rhea" id="RHEA-COMP:12147"/>
        <dbReference type="Rhea" id="RHEA-COMP:12148"/>
        <dbReference type="ChEBI" id="CHEBI:15377"/>
        <dbReference type="ChEBI" id="CHEBI:15378"/>
        <dbReference type="ChEBI" id="CHEBI:46858"/>
        <dbReference type="ChEBI" id="CHEBI:57865"/>
        <dbReference type="ChEBI" id="CHEBI:90602"/>
    </reaction>
</comment>
<comment type="cofactor">
    <cofactor evidence="1">
        <name>Mg(2+)</name>
        <dbReference type="ChEBI" id="CHEBI:18420"/>
    </cofactor>
</comment>
<comment type="activity regulation">
    <text evidence="1">Uridylyltransferase (UTase) activity is inhibited by glutamine, while glutamine activates uridylyl-removing (UR) activity.</text>
</comment>
<comment type="domain">
    <text evidence="1">Has four distinct domains: an N-terminal nucleotidyltransferase (NT) domain responsible for UTase activity, a central HD domain that encodes UR activity, and two C-terminal ACT domains that seem to have a role in glutamine sensing.</text>
</comment>
<comment type="similarity">
    <text evidence="1">Belongs to the GlnD family.</text>
</comment>
<protein>
    <recommendedName>
        <fullName evidence="1">Bifunctional uridylyltransferase/uridylyl-removing enzyme</fullName>
        <shortName evidence="1">UTase/UR</shortName>
    </recommendedName>
    <alternativeName>
        <fullName evidence="1">Bifunctional [protein-PII] modification enzyme</fullName>
    </alternativeName>
    <alternativeName>
        <fullName evidence="1">Bifunctional nitrogen sensor protein</fullName>
    </alternativeName>
    <domain>
        <recommendedName>
            <fullName evidence="1">[Protein-PII] uridylyltransferase</fullName>
            <shortName evidence="1">PII uridylyltransferase</shortName>
            <shortName evidence="1">UTase</shortName>
            <ecNumber evidence="1">2.7.7.59</ecNumber>
        </recommendedName>
    </domain>
    <domain>
        <recommendedName>
            <fullName evidence="1">[Protein-PII]-UMP uridylyl-removing enzyme</fullName>
            <shortName evidence="1">UR</shortName>
            <ecNumber evidence="1">3.1.4.-</ecNumber>
        </recommendedName>
    </domain>
</protein>
<sequence>MSADIATIQAPIPPLSPADFSSEDLRYPVLKQHLEEFQLWLEHAFKAGISAEALISARSDYIDQLLQQLWYAYRFDKISSLSLIAVGGYGRRELHPLSDIDVLILSEQPLTPPQAQNVGQFITLLWDIRLEVGHSVRTLEECLLEGLSDLTIATNLIESRLICGDSSIFLRLQRHTFSDGFWPSTEFFDAKIVEQHERHQRYHSTSYNLEPDIKSSPGGLRDIHTLLWVARRHFGATSIDEMVDFGFLTAEERNELNECQSFLWRIRFALHLVVNRYDNRLLFDRQFSIAQLLGYHGERNQPVERMMKDFYRMTRRVSELNNMLLQLFDEAILALETNEKSRSLDSEFQLRGQLIDLIDETLFIKEPAAIMRMFYRMAEHEEVQGIYSTTLRHLRYARRNLSQPLCELPEARQIFMDILRHPRAVESAFVPMHRHSVLGAYTPLWGNIVGQMQFDLFHAYTVDEHTIRVLRKLESFANENNRPAHPLCVELYPRLPQPELLHLAALFHDIAKGRTGDHSELGADDALAFSLKHGLNSREADLVAWLVRHHLLMSVTAQRRDIQDPEIIKQFTHQILNETRLRYLICLTVADICATNVNLWNSWKQSLLRELYFSTENQLRQGNTPDFRERIRHNRFQALALLRQDNINEQKLHQLWSRCHADYFLRHTPKQLAWHAHHLVQHDSQESLILISTKPTRGGTEIFIWSVDRPSLFAAVVGELDRRNLSVHHAQIFTNRDGMTMDTFVVLEPNGHPLASDRHEIIRNALLQVVLAPHTKTPKTRKLPTKLRHFNVPTKVTFLPTHNERRTYMELFALDQPGLLARVGNIFAEMGVSLHGAHITTIGERVEDFFVLADKDHKALNKKVREELSERLTATLNPKDKI</sequence>
<evidence type="ECO:0000255" key="1">
    <source>
        <dbReference type="HAMAP-Rule" id="MF_00277"/>
    </source>
</evidence>
<evidence type="ECO:0000255" key="2">
    <source>
        <dbReference type="PROSITE-ProRule" id="PRU01175"/>
    </source>
</evidence>
<accession>Q7N8P9</accession>
<feature type="chain" id="PRO_0000192751" description="Bifunctional uridylyltransferase/uridylyl-removing enzyme">
    <location>
        <begin position="1"/>
        <end position="882"/>
    </location>
</feature>
<feature type="domain" description="HD" evidence="2">
    <location>
        <begin position="462"/>
        <end position="577"/>
    </location>
</feature>
<feature type="domain" description="ACT 1" evidence="1">
    <location>
        <begin position="701"/>
        <end position="778"/>
    </location>
</feature>
<feature type="domain" description="ACT 2" evidence="1">
    <location>
        <begin position="808"/>
        <end position="882"/>
    </location>
</feature>
<feature type="region of interest" description="Uridylyltransferase">
    <location>
        <begin position="1"/>
        <end position="343"/>
    </location>
</feature>
<feature type="region of interest" description="Uridylyl-removing">
    <location>
        <begin position="344"/>
        <end position="700"/>
    </location>
</feature>